<gene>
    <name evidence="1" type="primary">rpsT</name>
    <name type="ordered locus">SAR11_0409</name>
</gene>
<proteinExistence type="inferred from homology"/>
<reference key="1">
    <citation type="journal article" date="2005" name="Science">
        <title>Genome streamlining in a cosmopolitan oceanic bacterium.</title>
        <authorList>
            <person name="Giovannoni S.J."/>
            <person name="Tripp H.J."/>
            <person name="Givan S."/>
            <person name="Podar M."/>
            <person name="Vergin K.L."/>
            <person name="Baptista D."/>
            <person name="Bibbs L."/>
            <person name="Eads J."/>
            <person name="Richardson T.H."/>
            <person name="Noordewier M."/>
            <person name="Rappe M.S."/>
            <person name="Short J.M."/>
            <person name="Carrington J.C."/>
            <person name="Mathur E.J."/>
        </authorList>
    </citation>
    <scope>NUCLEOTIDE SEQUENCE [LARGE SCALE GENOMIC DNA]</scope>
    <source>
        <strain>HTCC1062</strain>
    </source>
</reference>
<name>RS20_PELUB</name>
<dbReference type="EMBL" id="CP000084">
    <property type="protein sequence ID" value="AAZ21230.1"/>
    <property type="molecule type" value="Genomic_DNA"/>
</dbReference>
<dbReference type="RefSeq" id="WP_011281687.1">
    <property type="nucleotide sequence ID" value="NC_007205.1"/>
</dbReference>
<dbReference type="SMR" id="Q4FNK9"/>
<dbReference type="STRING" id="335992.SAR11_0409"/>
<dbReference type="GeneID" id="66294906"/>
<dbReference type="KEGG" id="pub:SAR11_0409"/>
<dbReference type="eggNOG" id="COG0268">
    <property type="taxonomic scope" value="Bacteria"/>
</dbReference>
<dbReference type="HOGENOM" id="CLU_160655_3_0_5"/>
<dbReference type="OrthoDB" id="9807974at2"/>
<dbReference type="Proteomes" id="UP000002528">
    <property type="component" value="Chromosome"/>
</dbReference>
<dbReference type="GO" id="GO:0015935">
    <property type="term" value="C:small ribosomal subunit"/>
    <property type="evidence" value="ECO:0007669"/>
    <property type="project" value="TreeGrafter"/>
</dbReference>
<dbReference type="GO" id="GO:0070181">
    <property type="term" value="F:small ribosomal subunit rRNA binding"/>
    <property type="evidence" value="ECO:0007669"/>
    <property type="project" value="TreeGrafter"/>
</dbReference>
<dbReference type="GO" id="GO:0003735">
    <property type="term" value="F:structural constituent of ribosome"/>
    <property type="evidence" value="ECO:0007669"/>
    <property type="project" value="InterPro"/>
</dbReference>
<dbReference type="GO" id="GO:0006412">
    <property type="term" value="P:translation"/>
    <property type="evidence" value="ECO:0007669"/>
    <property type="project" value="UniProtKB-UniRule"/>
</dbReference>
<dbReference type="Gene3D" id="1.20.58.110">
    <property type="entry name" value="Ribosomal protein S20"/>
    <property type="match status" value="1"/>
</dbReference>
<dbReference type="HAMAP" id="MF_00500">
    <property type="entry name" value="Ribosomal_bS20"/>
    <property type="match status" value="1"/>
</dbReference>
<dbReference type="InterPro" id="IPR002583">
    <property type="entry name" value="Ribosomal_bS20"/>
</dbReference>
<dbReference type="InterPro" id="IPR036510">
    <property type="entry name" value="Ribosomal_bS20_sf"/>
</dbReference>
<dbReference type="NCBIfam" id="TIGR00029">
    <property type="entry name" value="S20"/>
    <property type="match status" value="1"/>
</dbReference>
<dbReference type="PANTHER" id="PTHR33398">
    <property type="entry name" value="30S RIBOSOMAL PROTEIN S20"/>
    <property type="match status" value="1"/>
</dbReference>
<dbReference type="PANTHER" id="PTHR33398:SF1">
    <property type="entry name" value="SMALL RIBOSOMAL SUBUNIT PROTEIN BS20C"/>
    <property type="match status" value="1"/>
</dbReference>
<dbReference type="Pfam" id="PF01649">
    <property type="entry name" value="Ribosomal_S20p"/>
    <property type="match status" value="1"/>
</dbReference>
<dbReference type="SUPFAM" id="SSF46992">
    <property type="entry name" value="Ribosomal protein S20"/>
    <property type="match status" value="1"/>
</dbReference>
<comment type="function">
    <text evidence="1">Binds directly to 16S ribosomal RNA.</text>
</comment>
<comment type="similarity">
    <text evidence="1">Belongs to the bacterial ribosomal protein bS20 family.</text>
</comment>
<feature type="chain" id="PRO_0000236445" description="Small ribosomal subunit protein bS20">
    <location>
        <begin position="1"/>
        <end position="86"/>
    </location>
</feature>
<accession>Q4FNK9</accession>
<protein>
    <recommendedName>
        <fullName evidence="1">Small ribosomal subunit protein bS20</fullName>
    </recommendedName>
    <alternativeName>
        <fullName evidence="2">30S ribosomal protein S20</fullName>
    </alternativeName>
</protein>
<keyword id="KW-1185">Reference proteome</keyword>
<keyword id="KW-0687">Ribonucleoprotein</keyword>
<keyword id="KW-0689">Ribosomal protein</keyword>
<keyword id="KW-0694">RNA-binding</keyword>
<keyword id="KW-0699">rRNA-binding</keyword>
<organism>
    <name type="scientific">Pelagibacter ubique (strain HTCC1062)</name>
    <dbReference type="NCBI Taxonomy" id="335992"/>
    <lineage>
        <taxon>Bacteria</taxon>
        <taxon>Pseudomonadati</taxon>
        <taxon>Pseudomonadota</taxon>
        <taxon>Alphaproteobacteria</taxon>
        <taxon>Candidatus Pelagibacterales</taxon>
        <taxon>Candidatus Pelagibacteraceae</taxon>
        <taxon>Candidatus Pelagibacter</taxon>
    </lineage>
</organism>
<sequence>MANTKSAIKRIRRIATQTLVNKARKSKYRNAIKKMNLLLVEKKKDEALKFLPKLNSELMKVAKTGIIKKANASRNISRITKKISAL</sequence>
<evidence type="ECO:0000255" key="1">
    <source>
        <dbReference type="HAMAP-Rule" id="MF_00500"/>
    </source>
</evidence>
<evidence type="ECO:0000305" key="2"/>